<name>CHRD1_CHICK</name>
<reference key="1">
    <citation type="journal article" date="2005" name="Genome Biol.">
        <title>Full-length cDNAs from chicken bursal lymphocytes to facilitate gene function analysis.</title>
        <authorList>
            <person name="Caldwell R.B."/>
            <person name="Kierzek A.M."/>
            <person name="Arakawa H."/>
            <person name="Bezzubov Y."/>
            <person name="Zaim J."/>
            <person name="Fiedler P."/>
            <person name="Kutter S."/>
            <person name="Blagodatski A."/>
            <person name="Kostovska D."/>
            <person name="Koter M."/>
            <person name="Plachy J."/>
            <person name="Carninci P."/>
            <person name="Hayashizaki Y."/>
            <person name="Buerstedde J.-M."/>
        </authorList>
    </citation>
    <scope>NUCLEOTIDE SEQUENCE [LARGE SCALE MRNA]</scope>
    <source>
        <strain>CB</strain>
        <tissue>Bursa of Fabricius</tissue>
    </source>
</reference>
<dbReference type="EMBL" id="AJ719370">
    <property type="protein sequence ID" value="CAG31029.1"/>
    <property type="molecule type" value="mRNA"/>
</dbReference>
<dbReference type="EMBL" id="AJ721127">
    <property type="protein sequence ID" value="CAG32786.1"/>
    <property type="molecule type" value="mRNA"/>
</dbReference>
<dbReference type="RefSeq" id="NP_001026003.1">
    <property type="nucleotide sequence ID" value="NM_001030832.2"/>
</dbReference>
<dbReference type="SMR" id="Q5ZML4"/>
<dbReference type="FunCoup" id="Q5ZML4">
    <property type="interactions" value="2472"/>
</dbReference>
<dbReference type="STRING" id="9031.ENSGALP00000055946"/>
<dbReference type="PaxDb" id="9031-ENSGALP00000041804"/>
<dbReference type="Ensembl" id="ENSGALT00010017562.1">
    <property type="protein sequence ID" value="ENSGALP00010009706.1"/>
    <property type="gene ID" value="ENSGALG00010007375.1"/>
</dbReference>
<dbReference type="GeneID" id="419009"/>
<dbReference type="KEGG" id="gga:419009"/>
<dbReference type="CTD" id="26973"/>
<dbReference type="VEuPathDB" id="HostDB:geneid_419009"/>
<dbReference type="eggNOG" id="KOG1667">
    <property type="taxonomic scope" value="Eukaryota"/>
</dbReference>
<dbReference type="GeneTree" id="ENSGT00940000154174"/>
<dbReference type="InParanoid" id="Q5ZML4"/>
<dbReference type="OMA" id="KGYTCCK"/>
<dbReference type="OrthoDB" id="10261079at2759"/>
<dbReference type="PhylomeDB" id="Q5ZML4"/>
<dbReference type="PRO" id="PR:Q5ZML4"/>
<dbReference type="Proteomes" id="UP000000539">
    <property type="component" value="Chromosome 1"/>
</dbReference>
<dbReference type="GO" id="GO:0043531">
    <property type="term" value="F:ADP binding"/>
    <property type="evidence" value="ECO:0007669"/>
    <property type="project" value="Ensembl"/>
</dbReference>
<dbReference type="GO" id="GO:0005524">
    <property type="term" value="F:ATP binding"/>
    <property type="evidence" value="ECO:0007669"/>
    <property type="project" value="Ensembl"/>
</dbReference>
<dbReference type="GO" id="GO:0051879">
    <property type="term" value="F:Hsp90 protein binding"/>
    <property type="evidence" value="ECO:0007669"/>
    <property type="project" value="Ensembl"/>
</dbReference>
<dbReference type="GO" id="GO:0008270">
    <property type="term" value="F:zinc ion binding"/>
    <property type="evidence" value="ECO:0000318"/>
    <property type="project" value="GO_Central"/>
</dbReference>
<dbReference type="GO" id="GO:0051298">
    <property type="term" value="P:centrosome duplication"/>
    <property type="evidence" value="ECO:0000318"/>
    <property type="project" value="GO_Central"/>
</dbReference>
<dbReference type="GO" id="GO:0061077">
    <property type="term" value="P:chaperone-mediated protein folding"/>
    <property type="evidence" value="ECO:0007669"/>
    <property type="project" value="Ensembl"/>
</dbReference>
<dbReference type="GO" id="GO:1900034">
    <property type="term" value="P:regulation of cellular response to heat"/>
    <property type="evidence" value="ECO:0007669"/>
    <property type="project" value="Ensembl"/>
</dbReference>
<dbReference type="GO" id="GO:0010824">
    <property type="term" value="P:regulation of centrosome duplication"/>
    <property type="evidence" value="ECO:0000250"/>
    <property type="project" value="UniProtKB"/>
</dbReference>
<dbReference type="CDD" id="cd06488">
    <property type="entry name" value="p23_melusin_like"/>
    <property type="match status" value="1"/>
</dbReference>
<dbReference type="FunFam" id="2.60.40.790:FF:000017">
    <property type="entry name" value="Cysteine and histidine-rich domain-containing protein 1"/>
    <property type="match status" value="1"/>
</dbReference>
<dbReference type="FunFam" id="4.10.1130.20:FF:000001">
    <property type="entry name" value="Cysteine and histidine-rich domain-containing protein 1"/>
    <property type="match status" value="1"/>
</dbReference>
<dbReference type="FunFam" id="4.10.1130.20:FF:000002">
    <property type="entry name" value="cysteine and histidine-rich domain-containing protein 1"/>
    <property type="match status" value="1"/>
</dbReference>
<dbReference type="Gene3D" id="2.60.40.790">
    <property type="match status" value="1"/>
</dbReference>
<dbReference type="Gene3D" id="4.10.1130.20">
    <property type="match status" value="2"/>
</dbReference>
<dbReference type="InterPro" id="IPR007051">
    <property type="entry name" value="CHORD_dom"/>
</dbReference>
<dbReference type="InterPro" id="IPR039790">
    <property type="entry name" value="CHRD1"/>
</dbReference>
<dbReference type="InterPro" id="IPR007052">
    <property type="entry name" value="CS_dom"/>
</dbReference>
<dbReference type="InterPro" id="IPR008978">
    <property type="entry name" value="HSP20-like_chaperone"/>
</dbReference>
<dbReference type="PANTHER" id="PTHR46983">
    <property type="entry name" value="CYSTEINE AND HISTIDINE-RICH DOMAIN-CONTAINING PROTEIN 1"/>
    <property type="match status" value="1"/>
</dbReference>
<dbReference type="PANTHER" id="PTHR46983:SF4">
    <property type="entry name" value="CYSTEINE AND HISTIDINE-RICH DOMAIN-CONTAINING PROTEIN 1"/>
    <property type="match status" value="1"/>
</dbReference>
<dbReference type="Pfam" id="PF04968">
    <property type="entry name" value="CHORD"/>
    <property type="match status" value="2"/>
</dbReference>
<dbReference type="Pfam" id="PF04969">
    <property type="entry name" value="CS"/>
    <property type="match status" value="1"/>
</dbReference>
<dbReference type="SUPFAM" id="SSF49764">
    <property type="entry name" value="HSP20-like chaperones"/>
    <property type="match status" value="1"/>
</dbReference>
<dbReference type="PROSITE" id="PS51401">
    <property type="entry name" value="CHORD"/>
    <property type="match status" value="2"/>
</dbReference>
<dbReference type="PROSITE" id="PS51203">
    <property type="entry name" value="CS"/>
    <property type="match status" value="1"/>
</dbReference>
<proteinExistence type="evidence at transcript level"/>
<protein>
    <recommendedName>
        <fullName>Cysteine and histidine-rich domain-containing protein 1</fullName>
    </recommendedName>
    <alternativeName>
        <fullName>CHORD domain-containing protein 1</fullName>
    </alternativeName>
    <alternativeName>
        <fullName>Protein morgana</fullName>
    </alternativeName>
</protein>
<evidence type="ECO:0000250" key="1"/>
<evidence type="ECO:0000255" key="2">
    <source>
        <dbReference type="PROSITE-ProRule" id="PRU00547"/>
    </source>
</evidence>
<evidence type="ECO:0000255" key="3">
    <source>
        <dbReference type="PROSITE-ProRule" id="PRU00734"/>
    </source>
</evidence>
<evidence type="ECO:0000305" key="4"/>
<sequence>MSLLCYNRGCGQRFDPETNTEDSCTYHPGVPVFHDALKGWSCCKRRTTDFSDFLSIVGCTKGLHNSEKPPEPVKPDVKSTTERKELAELKPKFQEHIIQAPKPLETIKRPSPDEPMTNLQLKVSASLKQALDKLKLSSENEEKKEEDSDEIKIGTPCKNAGCSKTYQGPHSTEEVCQYHSGVPIFHEGMKYWSCCKRKTSDFNTFLAQEGCTTGTHVWTKKDAGKKVVPCRHDWHQTGGEVTVSIYAKNSVPDLSYVEANSTMLNIHIVFEGEKEFHRNVKLWGVIDVKRSYVNMTATKIEVSMRKAEPLLWASLELPVSNTQQTNENSDQ</sequence>
<accession>Q5ZML4</accession>
<accession>Q5ZHK7</accession>
<comment type="function">
    <text evidence="1">Regulates centrosome duplication.</text>
</comment>
<keyword id="KW-0479">Metal-binding</keyword>
<keyword id="KW-1185">Reference proteome</keyword>
<keyword id="KW-0677">Repeat</keyword>
<keyword id="KW-0862">Zinc</keyword>
<organism>
    <name type="scientific">Gallus gallus</name>
    <name type="common">Chicken</name>
    <dbReference type="NCBI Taxonomy" id="9031"/>
    <lineage>
        <taxon>Eukaryota</taxon>
        <taxon>Metazoa</taxon>
        <taxon>Chordata</taxon>
        <taxon>Craniata</taxon>
        <taxon>Vertebrata</taxon>
        <taxon>Euteleostomi</taxon>
        <taxon>Archelosauria</taxon>
        <taxon>Archosauria</taxon>
        <taxon>Dinosauria</taxon>
        <taxon>Saurischia</taxon>
        <taxon>Theropoda</taxon>
        <taxon>Coelurosauria</taxon>
        <taxon>Aves</taxon>
        <taxon>Neognathae</taxon>
        <taxon>Galloanserae</taxon>
        <taxon>Galliformes</taxon>
        <taxon>Phasianidae</taxon>
        <taxon>Phasianinae</taxon>
        <taxon>Gallus</taxon>
    </lineage>
</organism>
<feature type="chain" id="PRO_0000317773" description="Cysteine and histidine-rich domain-containing protein 1">
    <location>
        <begin position="1"/>
        <end position="331"/>
    </location>
</feature>
<feature type="domain" description="CHORD 1" evidence="3">
    <location>
        <begin position="5"/>
        <end position="64"/>
    </location>
</feature>
<feature type="domain" description="CHORD 2" evidence="3">
    <location>
        <begin position="157"/>
        <end position="216"/>
    </location>
</feature>
<feature type="domain" description="CS" evidence="2">
    <location>
        <begin position="227"/>
        <end position="316"/>
    </location>
</feature>
<feature type="binding site" evidence="3">
    <location>
        <position position="5"/>
    </location>
    <ligand>
        <name>Zn(2+)</name>
        <dbReference type="ChEBI" id="CHEBI:29105"/>
        <label>1</label>
    </ligand>
</feature>
<feature type="binding site" evidence="3">
    <location>
        <position position="10"/>
    </location>
    <ligand>
        <name>Zn(2+)</name>
        <dbReference type="ChEBI" id="CHEBI:29105"/>
        <label>1</label>
    </ligand>
</feature>
<feature type="binding site" evidence="3">
    <location>
        <position position="24"/>
    </location>
    <ligand>
        <name>Zn(2+)</name>
        <dbReference type="ChEBI" id="CHEBI:29105"/>
        <label>1</label>
    </ligand>
</feature>
<feature type="binding site" evidence="3">
    <location>
        <position position="27"/>
    </location>
    <ligand>
        <name>Zn(2+)</name>
        <dbReference type="ChEBI" id="CHEBI:29105"/>
        <label>2</label>
    </ligand>
</feature>
<feature type="binding site" evidence="3">
    <location>
        <position position="42"/>
    </location>
    <ligand>
        <name>Zn(2+)</name>
        <dbReference type="ChEBI" id="CHEBI:29105"/>
        <label>2</label>
    </ligand>
</feature>
<feature type="binding site" evidence="3">
    <location>
        <position position="43"/>
    </location>
    <ligand>
        <name>Zn(2+)</name>
        <dbReference type="ChEBI" id="CHEBI:29105"/>
        <label>2</label>
    </ligand>
</feature>
<feature type="binding site" evidence="3">
    <location>
        <position position="59"/>
    </location>
    <ligand>
        <name>Zn(2+)</name>
        <dbReference type="ChEBI" id="CHEBI:29105"/>
        <label>2</label>
    </ligand>
</feature>
<feature type="binding site" evidence="3">
    <location>
        <position position="64"/>
    </location>
    <ligand>
        <name>Zn(2+)</name>
        <dbReference type="ChEBI" id="CHEBI:29105"/>
        <label>1</label>
    </ligand>
</feature>
<feature type="binding site" evidence="3">
    <location>
        <position position="157"/>
    </location>
    <ligand>
        <name>Zn(2+)</name>
        <dbReference type="ChEBI" id="CHEBI:29105"/>
        <label>3</label>
    </ligand>
</feature>
<feature type="binding site" evidence="3">
    <location>
        <position position="162"/>
    </location>
    <ligand>
        <name>Zn(2+)</name>
        <dbReference type="ChEBI" id="CHEBI:29105"/>
        <label>3</label>
    </ligand>
</feature>
<feature type="binding site" evidence="3">
    <location>
        <position position="176"/>
    </location>
    <ligand>
        <name>Zn(2+)</name>
        <dbReference type="ChEBI" id="CHEBI:29105"/>
        <label>3</label>
    </ligand>
</feature>
<feature type="binding site" evidence="3">
    <location>
        <position position="179"/>
    </location>
    <ligand>
        <name>Zn(2+)</name>
        <dbReference type="ChEBI" id="CHEBI:29105"/>
        <label>4</label>
    </ligand>
</feature>
<feature type="binding site" evidence="3">
    <location>
        <position position="194"/>
    </location>
    <ligand>
        <name>Zn(2+)</name>
        <dbReference type="ChEBI" id="CHEBI:29105"/>
        <label>4</label>
    </ligand>
</feature>
<feature type="binding site" evidence="3">
    <location>
        <position position="195"/>
    </location>
    <ligand>
        <name>Zn(2+)</name>
        <dbReference type="ChEBI" id="CHEBI:29105"/>
        <label>4</label>
    </ligand>
</feature>
<feature type="binding site" evidence="3">
    <location>
        <position position="211"/>
    </location>
    <ligand>
        <name>Zn(2+)</name>
        <dbReference type="ChEBI" id="CHEBI:29105"/>
        <label>4</label>
    </ligand>
</feature>
<feature type="binding site" evidence="3">
    <location>
        <position position="216"/>
    </location>
    <ligand>
        <name>Zn(2+)</name>
        <dbReference type="ChEBI" id="CHEBI:29105"/>
        <label>3</label>
    </ligand>
</feature>
<feature type="sequence conflict" description="In Ref. 1; CAG32786." evidence="4" ref="1">
    <original>I</original>
    <variation>V</variation>
    <location>
        <position position="97"/>
    </location>
</feature>
<gene>
    <name type="primary">CHORDC1</name>
    <name type="ORF">RCJMB04_1l2</name>
    <name type="ORF">RCJMB04_37g20</name>
</gene>